<name>MLTF_PSEAE</name>
<protein>
    <recommendedName>
        <fullName evidence="1">Membrane-bound lytic murein transglycosylase F</fullName>
        <ecNumber evidence="1">4.2.2.n1</ecNumber>
    </recommendedName>
    <alternativeName>
        <fullName evidence="1">Murein lyase F</fullName>
    </alternativeName>
</protein>
<sequence>MFALTAYRLRCAAWLLATGIFLLLAGCSEAKAPTALERVQKEGVLRVITRNSPATYFQDRNGETGFEYELAKRFAERLGVELKIETADNLDDLYAQLSREGGPALAAAGLTPGREDDASVRYSHTYLDVTPQIIYRNGQQRPTRPEDLVGKRIMVLKGSSHAEQLAELKKQYPELKYEESDAVEVVDLLRMVDVGDIDLTLVDSNELAMNQVYFPNVRVAFDFGEARGLAWALPGGDDDSLMNEVNAFLDQAKKEGLLQRLKDRYYGHVDVLGYVGAYTFAQHLQQRLPRYESHFKQSGKQLDTDWRLLAAIGYQESLWQPGATSKTGVRGLMMLTNRTAQAMGVSNRLDPKQSIQGGSKYFVQIRSELPESIKEPDRSWFALAAYNIGGAHLEDARKMAEKEGLNPNKWLDVKKMLPRLAQKQWYAKTRYGYARGGETVHFVQNVRRYYDILTWVTQPQMEGSQIAESGLHLPGVNKTRPEEDSGDEKL</sequence>
<comment type="function">
    <text evidence="1">Murein-degrading enzyme that degrades murein glycan strands and insoluble, high-molecular weight murein sacculi, with the concomitant formation of a 1,6-anhydromuramoyl product. Lytic transglycosylases (LTs) play an integral role in the metabolism of the peptidoglycan (PG) sacculus. Their lytic action creates space within the PG sacculus to allow for its expansion as well as for the insertion of various structures such as secretion systems and flagella.</text>
</comment>
<comment type="catalytic activity">
    <reaction evidence="1">
        <text>Exolytic cleavage of the (1-&gt;4)-beta-glycosidic linkage between N-acetylmuramic acid (MurNAc) and N-acetylglucosamine (GlcNAc) residues in peptidoglycan, from either the reducing or the non-reducing ends of the peptidoglycan chains, with concomitant formation of a 1,6-anhydrobond in the MurNAc residue.</text>
        <dbReference type="EC" id="4.2.2.n1"/>
    </reaction>
</comment>
<comment type="subcellular location">
    <subcellularLocation>
        <location>Cell outer membrane</location>
        <topology>Peripheral membrane protein</topology>
    </subcellularLocation>
    <text evidence="1">Attached to the inner leaflet of the outer membrane.</text>
</comment>
<comment type="domain">
    <text evidence="1">The N-terminal domain does not have lytic activity and probably modulates enzymatic activity. The C-terminal domain is the catalytic active domain.</text>
</comment>
<comment type="similarity">
    <text evidence="1">In the N-terminal section; belongs to the bacterial solute-binding protein 3 family.</text>
</comment>
<comment type="similarity">
    <text evidence="1">In the C-terminal section; belongs to the transglycosylase Slt family.</text>
</comment>
<comment type="sequence caution" evidence="3">
    <conflict type="erroneous initiation">
        <sequence resource="EMBL-CDS" id="AAG07151"/>
    </conflict>
</comment>
<gene>
    <name evidence="1" type="primary">mltF</name>
    <name type="ordered locus">PA3764</name>
</gene>
<reference key="1">
    <citation type="journal article" date="2000" name="Nature">
        <title>Complete genome sequence of Pseudomonas aeruginosa PAO1, an opportunistic pathogen.</title>
        <authorList>
            <person name="Stover C.K."/>
            <person name="Pham X.-Q.T."/>
            <person name="Erwin A.L."/>
            <person name="Mizoguchi S.D."/>
            <person name="Warrener P."/>
            <person name="Hickey M.J."/>
            <person name="Brinkman F.S.L."/>
            <person name="Hufnagle W.O."/>
            <person name="Kowalik D.J."/>
            <person name="Lagrou M."/>
            <person name="Garber R.L."/>
            <person name="Goltry L."/>
            <person name="Tolentino E."/>
            <person name="Westbrock-Wadman S."/>
            <person name="Yuan Y."/>
            <person name="Brody L.L."/>
            <person name="Coulter S.N."/>
            <person name="Folger K.R."/>
            <person name="Kas A."/>
            <person name="Larbig K."/>
            <person name="Lim R.M."/>
            <person name="Smith K.A."/>
            <person name="Spencer D.H."/>
            <person name="Wong G.K.-S."/>
            <person name="Wu Z."/>
            <person name="Paulsen I.T."/>
            <person name="Reizer J."/>
            <person name="Saier M.H. Jr."/>
            <person name="Hancock R.E.W."/>
            <person name="Lory S."/>
            <person name="Olson M.V."/>
        </authorList>
    </citation>
    <scope>NUCLEOTIDE SEQUENCE [LARGE SCALE GENOMIC DNA]</scope>
    <source>
        <strain>ATCC 15692 / DSM 22644 / CIP 104116 / JCM 14847 / LMG 12228 / 1C / PRS 101 / PAO1</strain>
    </source>
</reference>
<dbReference type="EC" id="4.2.2.n1" evidence="1"/>
<dbReference type="EMBL" id="AE004091">
    <property type="protein sequence ID" value="AAG07151.1"/>
    <property type="status" value="ALT_INIT"/>
    <property type="molecule type" value="Genomic_DNA"/>
</dbReference>
<dbReference type="PIR" id="C83175">
    <property type="entry name" value="C83175"/>
</dbReference>
<dbReference type="RefSeq" id="NP_252453.1">
    <property type="nucleotide sequence ID" value="NC_002516.2"/>
</dbReference>
<dbReference type="RefSeq" id="WP_003092688.1">
    <property type="nucleotide sequence ID" value="NC_002516.2"/>
</dbReference>
<dbReference type="RefSeq" id="WP_003104806.1">
    <property type="nucleotide sequence ID" value="NZ_QZGE01000001.1"/>
</dbReference>
<dbReference type="PDB" id="4OWD">
    <property type="method" value="X-ray"/>
    <property type="resolution" value="2.21 A"/>
    <property type="chains" value="A=33-459"/>
</dbReference>
<dbReference type="PDB" id="4OYV">
    <property type="method" value="X-ray"/>
    <property type="resolution" value="2.31 A"/>
    <property type="chains" value="A=28-460"/>
</dbReference>
<dbReference type="PDB" id="4OZ9">
    <property type="method" value="X-ray"/>
    <property type="resolution" value="2.24 A"/>
    <property type="chains" value="A=33-460"/>
</dbReference>
<dbReference type="PDB" id="4P0G">
    <property type="method" value="X-ray"/>
    <property type="resolution" value="1.65 A"/>
    <property type="chains" value="A=28-460"/>
</dbReference>
<dbReference type="PDB" id="4P11">
    <property type="method" value="X-ray"/>
    <property type="resolution" value="1.89 A"/>
    <property type="chains" value="A=28-460"/>
</dbReference>
<dbReference type="PDB" id="5A5X">
    <property type="method" value="X-ray"/>
    <property type="resolution" value="1.80 A"/>
    <property type="chains" value="A=38-490, B=40-490"/>
</dbReference>
<dbReference type="PDB" id="5AA1">
    <property type="method" value="X-ray"/>
    <property type="resolution" value="2.89 A"/>
    <property type="chains" value="A/B/C/D=8-490"/>
</dbReference>
<dbReference type="PDB" id="5AA2">
    <property type="method" value="X-ray"/>
    <property type="resolution" value="2.80 A"/>
    <property type="chains" value="A/B/C/D=8-490"/>
</dbReference>
<dbReference type="PDB" id="5AA3">
    <property type="method" value="X-ray"/>
    <property type="resolution" value="3.20 A"/>
    <property type="chains" value="A/B/C/D/E/F/G/H/I/J/K/L=8-490"/>
</dbReference>
<dbReference type="PDBsum" id="4OWD"/>
<dbReference type="PDBsum" id="4OYV"/>
<dbReference type="PDBsum" id="4OZ9"/>
<dbReference type="PDBsum" id="4P0G"/>
<dbReference type="PDBsum" id="4P11"/>
<dbReference type="PDBsum" id="5A5X"/>
<dbReference type="PDBsum" id="5AA1"/>
<dbReference type="PDBsum" id="5AA2"/>
<dbReference type="PDBsum" id="5AA3"/>
<dbReference type="SMR" id="Q9HXN1"/>
<dbReference type="FunCoup" id="Q9HXN1">
    <property type="interactions" value="34"/>
</dbReference>
<dbReference type="STRING" id="208964.PA3764"/>
<dbReference type="CAZy" id="GH23">
    <property type="family name" value="Glycoside Hydrolase Family 23"/>
</dbReference>
<dbReference type="PaxDb" id="208964-PA3764"/>
<dbReference type="DNASU" id="880530"/>
<dbReference type="GeneID" id="880530"/>
<dbReference type="KEGG" id="pae:PA3764"/>
<dbReference type="PATRIC" id="fig|208964.12.peg.3939"/>
<dbReference type="PseudoCAP" id="PA3764"/>
<dbReference type="HOGENOM" id="CLU_027494_0_1_6"/>
<dbReference type="InParanoid" id="Q9HXN1"/>
<dbReference type="OrthoDB" id="9815002at2"/>
<dbReference type="EvolutionaryTrace" id="Q9HXN1"/>
<dbReference type="Proteomes" id="UP000002438">
    <property type="component" value="Chromosome"/>
</dbReference>
<dbReference type="GO" id="GO:0009279">
    <property type="term" value="C:cell outer membrane"/>
    <property type="evidence" value="ECO:0000318"/>
    <property type="project" value="GO_Central"/>
</dbReference>
<dbReference type="GO" id="GO:0008933">
    <property type="term" value="F:peptidoglycan lytic transglycosylase activity"/>
    <property type="evidence" value="ECO:0000318"/>
    <property type="project" value="GO_Central"/>
</dbReference>
<dbReference type="GO" id="GO:0016998">
    <property type="term" value="P:cell wall macromolecule catabolic process"/>
    <property type="evidence" value="ECO:0007669"/>
    <property type="project" value="UniProtKB-UniRule"/>
</dbReference>
<dbReference type="GO" id="GO:0071555">
    <property type="term" value="P:cell wall organization"/>
    <property type="evidence" value="ECO:0007669"/>
    <property type="project" value="UniProtKB-KW"/>
</dbReference>
<dbReference type="GO" id="GO:0009253">
    <property type="term" value="P:peptidoglycan catabolic process"/>
    <property type="evidence" value="ECO:0000318"/>
    <property type="project" value="GO_Central"/>
</dbReference>
<dbReference type="CDD" id="cd13403">
    <property type="entry name" value="MLTF-like"/>
    <property type="match status" value="1"/>
</dbReference>
<dbReference type="CDD" id="cd01009">
    <property type="entry name" value="PBP2_YfhD_N"/>
    <property type="match status" value="1"/>
</dbReference>
<dbReference type="Gene3D" id="1.10.530.10">
    <property type="match status" value="1"/>
</dbReference>
<dbReference type="Gene3D" id="3.40.190.10">
    <property type="entry name" value="Periplasmic binding protein-like II"/>
    <property type="match status" value="2"/>
</dbReference>
<dbReference type="HAMAP" id="MF_02016">
    <property type="entry name" value="MltF"/>
    <property type="match status" value="1"/>
</dbReference>
<dbReference type="InterPro" id="IPR023346">
    <property type="entry name" value="Lysozyme-like_dom_sf"/>
</dbReference>
<dbReference type="InterPro" id="IPR023703">
    <property type="entry name" value="MltF"/>
</dbReference>
<dbReference type="InterPro" id="IPR001638">
    <property type="entry name" value="Solute-binding_3/MltF_N"/>
</dbReference>
<dbReference type="InterPro" id="IPR000189">
    <property type="entry name" value="Transglyc_AS"/>
</dbReference>
<dbReference type="InterPro" id="IPR008258">
    <property type="entry name" value="Transglycosylase_SLT_dom_1"/>
</dbReference>
<dbReference type="NCBIfam" id="NF008112">
    <property type="entry name" value="PRK10859.1"/>
    <property type="match status" value="1"/>
</dbReference>
<dbReference type="PANTHER" id="PTHR35936">
    <property type="entry name" value="MEMBRANE-BOUND LYTIC MUREIN TRANSGLYCOSYLASE F"/>
    <property type="match status" value="1"/>
</dbReference>
<dbReference type="PANTHER" id="PTHR35936:SF32">
    <property type="entry name" value="MEMBRANE-BOUND LYTIC MUREIN TRANSGLYCOSYLASE F"/>
    <property type="match status" value="1"/>
</dbReference>
<dbReference type="Pfam" id="PF00497">
    <property type="entry name" value="SBP_bac_3"/>
    <property type="match status" value="1"/>
</dbReference>
<dbReference type="Pfam" id="PF01464">
    <property type="entry name" value="SLT"/>
    <property type="match status" value="1"/>
</dbReference>
<dbReference type="SMART" id="SM00062">
    <property type="entry name" value="PBPb"/>
    <property type="match status" value="1"/>
</dbReference>
<dbReference type="SUPFAM" id="SSF53955">
    <property type="entry name" value="Lysozyme-like"/>
    <property type="match status" value="1"/>
</dbReference>
<dbReference type="SUPFAM" id="SSF53850">
    <property type="entry name" value="Periplasmic binding protein-like II"/>
    <property type="match status" value="1"/>
</dbReference>
<dbReference type="PROSITE" id="PS00922">
    <property type="entry name" value="TRANSGLYCOSYLASE"/>
    <property type="match status" value="1"/>
</dbReference>
<proteinExistence type="evidence at protein level"/>
<feature type="signal peptide" evidence="1">
    <location>
        <begin position="1"/>
        <end position="32"/>
    </location>
</feature>
<feature type="chain" id="PRO_0000353957" description="Membrane-bound lytic murein transglycosylase F">
    <location>
        <begin position="33"/>
        <end position="490"/>
    </location>
</feature>
<feature type="region of interest" description="Non-LT domain" evidence="1">
    <location>
        <begin position="33"/>
        <end position="269"/>
    </location>
</feature>
<feature type="region of interest" description="LT domain" evidence="1">
    <location>
        <begin position="270"/>
        <end position="490"/>
    </location>
</feature>
<feature type="region of interest" description="Disordered" evidence="2">
    <location>
        <begin position="467"/>
        <end position="490"/>
    </location>
</feature>
<feature type="compositionally biased region" description="Basic and acidic residues" evidence="2">
    <location>
        <begin position="479"/>
        <end position="490"/>
    </location>
</feature>
<feature type="active site" evidence="1">
    <location>
        <position position="316"/>
    </location>
</feature>
<feature type="helix" evidence="4">
    <location>
        <begin position="35"/>
        <end position="42"/>
    </location>
</feature>
<feature type="strand" evidence="4">
    <location>
        <begin position="44"/>
        <end position="52"/>
    </location>
</feature>
<feature type="turn" evidence="4">
    <location>
        <begin position="53"/>
        <end position="55"/>
    </location>
</feature>
<feature type="strand" evidence="4">
    <location>
        <begin position="56"/>
        <end position="59"/>
    </location>
</feature>
<feature type="strand" evidence="4">
    <location>
        <begin position="62"/>
        <end position="64"/>
    </location>
</feature>
<feature type="helix" evidence="4">
    <location>
        <begin position="66"/>
        <end position="78"/>
    </location>
</feature>
<feature type="strand" evidence="4">
    <location>
        <begin position="81"/>
        <end position="89"/>
    </location>
</feature>
<feature type="helix" evidence="4">
    <location>
        <begin position="90"/>
        <end position="97"/>
    </location>
</feature>
<feature type="strand" evidence="4">
    <location>
        <begin position="104"/>
        <end position="106"/>
    </location>
</feature>
<feature type="strand" evidence="6">
    <location>
        <begin position="115"/>
        <end position="117"/>
    </location>
</feature>
<feature type="strand" evidence="4">
    <location>
        <begin position="120"/>
        <end position="122"/>
    </location>
</feature>
<feature type="strand" evidence="4">
    <location>
        <begin position="127"/>
        <end position="129"/>
    </location>
</feature>
<feature type="strand" evidence="4">
    <location>
        <begin position="131"/>
        <end position="136"/>
    </location>
</feature>
<feature type="helix" evidence="4">
    <location>
        <begin position="145"/>
        <end position="148"/>
    </location>
</feature>
<feature type="strand" evidence="4">
    <location>
        <begin position="153"/>
        <end position="156"/>
    </location>
</feature>
<feature type="helix" evidence="4">
    <location>
        <begin position="160"/>
        <end position="171"/>
    </location>
</feature>
<feature type="strand" evidence="4">
    <location>
        <begin position="178"/>
        <end position="182"/>
    </location>
</feature>
<feature type="helix" evidence="4">
    <location>
        <begin position="185"/>
        <end position="193"/>
    </location>
</feature>
<feature type="strand" evidence="4">
    <location>
        <begin position="196"/>
        <end position="203"/>
    </location>
</feature>
<feature type="helix" evidence="4">
    <location>
        <begin position="204"/>
        <end position="210"/>
    </location>
</feature>
<feature type="turn" evidence="4">
    <location>
        <begin position="211"/>
        <end position="213"/>
    </location>
</feature>
<feature type="strand" evidence="4">
    <location>
        <begin position="217"/>
        <end position="222"/>
    </location>
</feature>
<feature type="strand" evidence="4">
    <location>
        <begin position="227"/>
        <end position="229"/>
    </location>
</feature>
<feature type="strand" evidence="4">
    <location>
        <begin position="232"/>
        <end position="237"/>
    </location>
</feature>
<feature type="helix" evidence="4">
    <location>
        <begin position="240"/>
        <end position="254"/>
    </location>
</feature>
<feature type="helix" evidence="4">
    <location>
        <begin position="257"/>
        <end position="266"/>
    </location>
</feature>
<feature type="helix" evidence="4">
    <location>
        <begin position="268"/>
        <end position="272"/>
    </location>
</feature>
<feature type="helix" evidence="4">
    <location>
        <begin position="274"/>
        <end position="286"/>
    </location>
</feature>
<feature type="helix" evidence="4">
    <location>
        <begin position="288"/>
        <end position="302"/>
    </location>
</feature>
<feature type="helix" evidence="4">
    <location>
        <begin position="306"/>
        <end position="317"/>
    </location>
</feature>
<feature type="strand" evidence="5">
    <location>
        <begin position="326"/>
        <end position="328"/>
    </location>
</feature>
<feature type="turn" evidence="4">
    <location>
        <begin position="331"/>
        <end position="334"/>
    </location>
</feature>
<feature type="helix" evidence="4">
    <location>
        <begin position="337"/>
        <end position="343"/>
    </location>
</feature>
<feature type="helix" evidence="4">
    <location>
        <begin position="351"/>
        <end position="368"/>
    </location>
</feature>
<feature type="helix" evidence="4">
    <location>
        <begin position="377"/>
        <end position="388"/>
    </location>
</feature>
<feature type="helix" evidence="4">
    <location>
        <begin position="390"/>
        <end position="402"/>
    </location>
</feature>
<feature type="helix" evidence="4">
    <location>
        <begin position="410"/>
        <end position="416"/>
    </location>
</feature>
<feature type="helix" evidence="4">
    <location>
        <begin position="417"/>
        <end position="421"/>
    </location>
</feature>
<feature type="helix" evidence="4">
    <location>
        <begin position="423"/>
        <end position="426"/>
    </location>
</feature>
<feature type="strand" evidence="4">
    <location>
        <begin position="429"/>
        <end position="431"/>
    </location>
</feature>
<feature type="helix" evidence="4">
    <location>
        <begin position="436"/>
        <end position="454"/>
    </location>
</feature>
<accession>Q9HXN1</accession>
<keyword id="KW-0002">3D-structure</keyword>
<keyword id="KW-0998">Cell outer membrane</keyword>
<keyword id="KW-0961">Cell wall biogenesis/degradation</keyword>
<keyword id="KW-0456">Lyase</keyword>
<keyword id="KW-0472">Membrane</keyword>
<keyword id="KW-1185">Reference proteome</keyword>
<keyword id="KW-0732">Signal</keyword>
<evidence type="ECO:0000255" key="1">
    <source>
        <dbReference type="HAMAP-Rule" id="MF_02016"/>
    </source>
</evidence>
<evidence type="ECO:0000256" key="2">
    <source>
        <dbReference type="SAM" id="MobiDB-lite"/>
    </source>
</evidence>
<evidence type="ECO:0000305" key="3"/>
<evidence type="ECO:0007829" key="4">
    <source>
        <dbReference type="PDB" id="4P0G"/>
    </source>
</evidence>
<evidence type="ECO:0007829" key="5">
    <source>
        <dbReference type="PDB" id="4P11"/>
    </source>
</evidence>
<evidence type="ECO:0007829" key="6">
    <source>
        <dbReference type="PDB" id="5AA1"/>
    </source>
</evidence>
<organism>
    <name type="scientific">Pseudomonas aeruginosa (strain ATCC 15692 / DSM 22644 / CIP 104116 / JCM 14847 / LMG 12228 / 1C / PRS 101 / PAO1)</name>
    <dbReference type="NCBI Taxonomy" id="208964"/>
    <lineage>
        <taxon>Bacteria</taxon>
        <taxon>Pseudomonadati</taxon>
        <taxon>Pseudomonadota</taxon>
        <taxon>Gammaproteobacteria</taxon>
        <taxon>Pseudomonadales</taxon>
        <taxon>Pseudomonadaceae</taxon>
        <taxon>Pseudomonas</taxon>
    </lineage>
</organism>